<feature type="chain" id="PRO_0000310356" description="Uncharacterized J domain-containing protein C3E7.11c">
    <location>
        <begin position="1"/>
        <end position="355"/>
    </location>
</feature>
<feature type="domain" description="J" evidence="1">
    <location>
        <begin position="9"/>
        <end position="75"/>
    </location>
</feature>
<sequence length="355" mass="40531">MVQRVVDRDYYDILNISVDADGDTIKKSYRRLAILYHPDKNRENPEAAREKFQKLAEAYQVLSDPKLREKYDKLGKVGAVPDAGFEDAFEFFKNLFGGDSFRDYVGELNLLKELCKMINEEPELKAIEDTEESKKQLQREESKEADRLLQERIDVLCKNLLDKLSIWTETDMSDRVTDAFKQKMQFEAELLKDESFGNEMLHAIGSTYVQRANILIQSQSFLGIRGVWGSLCAKGTLLKDTWNTVVSAVDVQSSAAALAKAEEGEEQWSKEKRDEAARELTGKVLSATWKGTRFEVQSVIRTVSDKILYDKAVPLEKRINRANALLMIGQVFLKVAPNEKSDANYFEDLMNDRGK</sequence>
<keyword id="KW-0143">Chaperone</keyword>
<keyword id="KW-0963">Cytoplasm</keyword>
<keyword id="KW-1185">Reference proteome</keyword>
<organism>
    <name type="scientific">Schizosaccharomyces pombe (strain 972 / ATCC 24843)</name>
    <name type="common">Fission yeast</name>
    <dbReference type="NCBI Taxonomy" id="284812"/>
    <lineage>
        <taxon>Eukaryota</taxon>
        <taxon>Fungi</taxon>
        <taxon>Dikarya</taxon>
        <taxon>Ascomycota</taxon>
        <taxon>Taphrinomycotina</taxon>
        <taxon>Schizosaccharomycetes</taxon>
        <taxon>Schizosaccharomycetales</taxon>
        <taxon>Schizosaccharomycetaceae</taxon>
        <taxon>Schizosaccharomyces</taxon>
    </lineage>
</organism>
<gene>
    <name type="ORF">SPBC3E7.11c</name>
</gene>
<accession>O59731</accession>
<dbReference type="EMBL" id="CU329671">
    <property type="protein sequence ID" value="CAA19014.1"/>
    <property type="molecule type" value="Genomic_DNA"/>
</dbReference>
<dbReference type="PIR" id="T40385">
    <property type="entry name" value="T40385"/>
</dbReference>
<dbReference type="RefSeq" id="NP_596098.1">
    <property type="nucleotide sequence ID" value="NM_001022014.2"/>
</dbReference>
<dbReference type="SMR" id="O59731"/>
<dbReference type="BioGRID" id="277201">
    <property type="interactions" value="11"/>
</dbReference>
<dbReference type="FunCoup" id="O59731">
    <property type="interactions" value="27"/>
</dbReference>
<dbReference type="iPTMnet" id="O59731"/>
<dbReference type="PaxDb" id="4896-SPBC3E7.11c.1"/>
<dbReference type="EnsemblFungi" id="SPBC3E7.11c.1">
    <property type="protein sequence ID" value="SPBC3E7.11c.1:pep"/>
    <property type="gene ID" value="SPBC3E7.11c"/>
</dbReference>
<dbReference type="KEGG" id="spo:2540676"/>
<dbReference type="PomBase" id="SPBC3E7.11c"/>
<dbReference type="VEuPathDB" id="FungiDB:SPBC3E7.11c"/>
<dbReference type="eggNOG" id="KOG0691">
    <property type="taxonomic scope" value="Eukaryota"/>
</dbReference>
<dbReference type="HOGENOM" id="CLU_025145_3_1_1"/>
<dbReference type="InParanoid" id="O59731"/>
<dbReference type="OMA" id="RPALMDK"/>
<dbReference type="PhylomeDB" id="O59731"/>
<dbReference type="PRO" id="PR:O59731"/>
<dbReference type="Proteomes" id="UP000002485">
    <property type="component" value="Chromosome II"/>
</dbReference>
<dbReference type="GO" id="GO:0005829">
    <property type="term" value="C:cytosol"/>
    <property type="evidence" value="ECO:0007005"/>
    <property type="project" value="PomBase"/>
</dbReference>
<dbReference type="GO" id="GO:0005739">
    <property type="term" value="C:mitochondrion"/>
    <property type="evidence" value="ECO:0007669"/>
    <property type="project" value="GOC"/>
</dbReference>
<dbReference type="GO" id="GO:0030544">
    <property type="term" value="F:Hsp70 protein binding"/>
    <property type="evidence" value="ECO:0000255"/>
    <property type="project" value="PomBase"/>
</dbReference>
<dbReference type="GO" id="GO:0016558">
    <property type="term" value="P:protein import into peroxisome matrix"/>
    <property type="evidence" value="ECO:0000266"/>
    <property type="project" value="PomBase"/>
</dbReference>
<dbReference type="GO" id="GO:0045040">
    <property type="term" value="P:protein insertion into mitochondrial outer membrane"/>
    <property type="evidence" value="ECO:0000266"/>
    <property type="project" value="PomBase"/>
</dbReference>
<dbReference type="CDD" id="cd06257">
    <property type="entry name" value="DnaJ"/>
    <property type="match status" value="1"/>
</dbReference>
<dbReference type="FunFam" id="1.10.287.110:FF:000028">
    <property type="entry name" value="DnaJ domain protein"/>
    <property type="match status" value="1"/>
</dbReference>
<dbReference type="Gene3D" id="1.10.287.110">
    <property type="entry name" value="DnaJ domain"/>
    <property type="match status" value="1"/>
</dbReference>
<dbReference type="InterPro" id="IPR001623">
    <property type="entry name" value="DnaJ_domain"/>
</dbReference>
<dbReference type="InterPro" id="IPR018253">
    <property type="entry name" value="DnaJ_domain_CS"/>
</dbReference>
<dbReference type="InterPro" id="IPR026894">
    <property type="entry name" value="DnaJ_X"/>
</dbReference>
<dbReference type="InterPro" id="IPR036869">
    <property type="entry name" value="J_dom_sf"/>
</dbReference>
<dbReference type="PANTHER" id="PTHR44924">
    <property type="entry name" value="DNAJ SUBFAMILY A MEMBER 2"/>
    <property type="match status" value="1"/>
</dbReference>
<dbReference type="PANTHER" id="PTHR44924:SF1">
    <property type="entry name" value="DNAJ SUBFAMILY A MEMBER 2"/>
    <property type="match status" value="1"/>
</dbReference>
<dbReference type="Pfam" id="PF00226">
    <property type="entry name" value="DnaJ"/>
    <property type="match status" value="1"/>
</dbReference>
<dbReference type="Pfam" id="PF14308">
    <property type="entry name" value="DnaJ-X"/>
    <property type="match status" value="1"/>
</dbReference>
<dbReference type="PRINTS" id="PR00625">
    <property type="entry name" value="JDOMAIN"/>
</dbReference>
<dbReference type="SMART" id="SM00271">
    <property type="entry name" value="DnaJ"/>
    <property type="match status" value="1"/>
</dbReference>
<dbReference type="SUPFAM" id="SSF46565">
    <property type="entry name" value="Chaperone J-domain"/>
    <property type="match status" value="1"/>
</dbReference>
<dbReference type="PROSITE" id="PS00636">
    <property type="entry name" value="DNAJ_1"/>
    <property type="match status" value="1"/>
</dbReference>
<dbReference type="PROSITE" id="PS50076">
    <property type="entry name" value="DNAJ_2"/>
    <property type="match status" value="1"/>
</dbReference>
<reference key="1">
    <citation type="journal article" date="2002" name="Nature">
        <title>The genome sequence of Schizosaccharomyces pombe.</title>
        <authorList>
            <person name="Wood V."/>
            <person name="Gwilliam R."/>
            <person name="Rajandream M.A."/>
            <person name="Lyne M.H."/>
            <person name="Lyne R."/>
            <person name="Stewart A."/>
            <person name="Sgouros J.G."/>
            <person name="Peat N."/>
            <person name="Hayles J."/>
            <person name="Baker S.G."/>
            <person name="Basham D."/>
            <person name="Bowman S."/>
            <person name="Brooks K."/>
            <person name="Brown D."/>
            <person name="Brown S."/>
            <person name="Chillingworth T."/>
            <person name="Churcher C.M."/>
            <person name="Collins M."/>
            <person name="Connor R."/>
            <person name="Cronin A."/>
            <person name="Davis P."/>
            <person name="Feltwell T."/>
            <person name="Fraser A."/>
            <person name="Gentles S."/>
            <person name="Goble A."/>
            <person name="Hamlin N."/>
            <person name="Harris D.E."/>
            <person name="Hidalgo J."/>
            <person name="Hodgson G."/>
            <person name="Holroyd S."/>
            <person name="Hornsby T."/>
            <person name="Howarth S."/>
            <person name="Huckle E.J."/>
            <person name="Hunt S."/>
            <person name="Jagels K."/>
            <person name="James K.D."/>
            <person name="Jones L."/>
            <person name="Jones M."/>
            <person name="Leather S."/>
            <person name="McDonald S."/>
            <person name="McLean J."/>
            <person name="Mooney P."/>
            <person name="Moule S."/>
            <person name="Mungall K.L."/>
            <person name="Murphy L.D."/>
            <person name="Niblett D."/>
            <person name="Odell C."/>
            <person name="Oliver K."/>
            <person name="O'Neil S."/>
            <person name="Pearson D."/>
            <person name="Quail M.A."/>
            <person name="Rabbinowitsch E."/>
            <person name="Rutherford K.M."/>
            <person name="Rutter S."/>
            <person name="Saunders D."/>
            <person name="Seeger K."/>
            <person name="Sharp S."/>
            <person name="Skelton J."/>
            <person name="Simmonds M.N."/>
            <person name="Squares R."/>
            <person name="Squares S."/>
            <person name="Stevens K."/>
            <person name="Taylor K."/>
            <person name="Taylor R.G."/>
            <person name="Tivey A."/>
            <person name="Walsh S.V."/>
            <person name="Warren T."/>
            <person name="Whitehead S."/>
            <person name="Woodward J.R."/>
            <person name="Volckaert G."/>
            <person name="Aert R."/>
            <person name="Robben J."/>
            <person name="Grymonprez B."/>
            <person name="Weltjens I."/>
            <person name="Vanstreels E."/>
            <person name="Rieger M."/>
            <person name="Schaefer M."/>
            <person name="Mueller-Auer S."/>
            <person name="Gabel C."/>
            <person name="Fuchs M."/>
            <person name="Duesterhoeft A."/>
            <person name="Fritzc C."/>
            <person name="Holzer E."/>
            <person name="Moestl D."/>
            <person name="Hilbert H."/>
            <person name="Borzym K."/>
            <person name="Langer I."/>
            <person name="Beck A."/>
            <person name="Lehrach H."/>
            <person name="Reinhardt R."/>
            <person name="Pohl T.M."/>
            <person name="Eger P."/>
            <person name="Zimmermann W."/>
            <person name="Wedler H."/>
            <person name="Wambutt R."/>
            <person name="Purnelle B."/>
            <person name="Goffeau A."/>
            <person name="Cadieu E."/>
            <person name="Dreano S."/>
            <person name="Gloux S."/>
            <person name="Lelaure V."/>
            <person name="Mottier S."/>
            <person name="Galibert F."/>
            <person name="Aves S.J."/>
            <person name="Xiang Z."/>
            <person name="Hunt C."/>
            <person name="Moore K."/>
            <person name="Hurst S.M."/>
            <person name="Lucas M."/>
            <person name="Rochet M."/>
            <person name="Gaillardin C."/>
            <person name="Tallada V.A."/>
            <person name="Garzon A."/>
            <person name="Thode G."/>
            <person name="Daga R.R."/>
            <person name="Cruzado L."/>
            <person name="Jimenez J."/>
            <person name="Sanchez M."/>
            <person name="del Rey F."/>
            <person name="Benito J."/>
            <person name="Dominguez A."/>
            <person name="Revuelta J.L."/>
            <person name="Moreno S."/>
            <person name="Armstrong J."/>
            <person name="Forsburg S.L."/>
            <person name="Cerutti L."/>
            <person name="Lowe T."/>
            <person name="McCombie W.R."/>
            <person name="Paulsen I."/>
            <person name="Potashkin J."/>
            <person name="Shpakovski G.V."/>
            <person name="Ussery D."/>
            <person name="Barrell B.G."/>
            <person name="Nurse P."/>
        </authorList>
    </citation>
    <scope>NUCLEOTIDE SEQUENCE [LARGE SCALE GENOMIC DNA]</scope>
    <source>
        <strain>972 / ATCC 24843</strain>
    </source>
</reference>
<reference key="2">
    <citation type="journal article" date="2006" name="Nat. Biotechnol.">
        <title>ORFeome cloning and global analysis of protein localization in the fission yeast Schizosaccharomyces pombe.</title>
        <authorList>
            <person name="Matsuyama A."/>
            <person name="Arai R."/>
            <person name="Yashiroda Y."/>
            <person name="Shirai A."/>
            <person name="Kamata A."/>
            <person name="Sekido S."/>
            <person name="Kobayashi Y."/>
            <person name="Hashimoto A."/>
            <person name="Hamamoto M."/>
            <person name="Hiraoka Y."/>
            <person name="Horinouchi S."/>
            <person name="Yoshida M."/>
        </authorList>
    </citation>
    <scope>SUBCELLULAR LOCATION [LARGE SCALE ANALYSIS]</scope>
</reference>
<evidence type="ECO:0000255" key="1">
    <source>
        <dbReference type="PROSITE-ProRule" id="PRU00286"/>
    </source>
</evidence>
<evidence type="ECO:0000269" key="2">
    <source>
    </source>
</evidence>
<evidence type="ECO:0000305" key="3"/>
<proteinExistence type="inferred from homology"/>
<protein>
    <recommendedName>
        <fullName>Uncharacterized J domain-containing protein C3E7.11c</fullName>
    </recommendedName>
</protein>
<name>YHXB_SCHPO</name>
<comment type="subcellular location">
    <subcellularLocation>
        <location evidence="2">Cytoplasm</location>
    </subcellularLocation>
</comment>
<comment type="similarity">
    <text evidence="3">Belongs to the DnaJ family.</text>
</comment>